<sequence length="36" mass="4089">MQAEVLDFFEDRGETPPGRSSEAGYGLFWRVGVVWV</sequence>
<proteinExistence type="predicted"/>
<reference key="1">
    <citation type="journal article" date="1998" name="Science">
        <title>Complete genome sequence of Treponema pallidum, the syphilis spirochete.</title>
        <authorList>
            <person name="Fraser C.M."/>
            <person name="Norris S.J."/>
            <person name="Weinstock G.M."/>
            <person name="White O."/>
            <person name="Sutton G.G."/>
            <person name="Dodson R.J."/>
            <person name="Gwinn M.L."/>
            <person name="Hickey E.K."/>
            <person name="Clayton R.A."/>
            <person name="Ketchum K.A."/>
            <person name="Sodergren E."/>
            <person name="Hardham J.M."/>
            <person name="McLeod M.P."/>
            <person name="Salzberg S.L."/>
            <person name="Peterson J.D."/>
            <person name="Khalak H.G."/>
            <person name="Richardson D.L."/>
            <person name="Howell J.K."/>
            <person name="Chidambaram M."/>
            <person name="Utterback T.R."/>
            <person name="McDonald L.A."/>
            <person name="Artiach P."/>
            <person name="Bowman C."/>
            <person name="Cotton M.D."/>
            <person name="Fujii C."/>
            <person name="Garland S.A."/>
            <person name="Hatch B."/>
            <person name="Horst K."/>
            <person name="Roberts K.M."/>
            <person name="Sandusky M."/>
            <person name="Weidman J.F."/>
            <person name="Smith H.O."/>
            <person name="Venter J.C."/>
        </authorList>
    </citation>
    <scope>NUCLEOTIDE SEQUENCE [LARGE SCALE GENOMIC DNA]</scope>
    <source>
        <strain>Nichols</strain>
    </source>
</reference>
<gene>
    <name type="ordered locus">TP_0699</name>
</gene>
<keyword id="KW-1185">Reference proteome</keyword>
<accession>O83697</accession>
<dbReference type="EMBL" id="AE000520">
    <property type="protein sequence ID" value="AAC65668.1"/>
    <property type="molecule type" value="Genomic_DNA"/>
</dbReference>
<dbReference type="PIR" id="H71293">
    <property type="entry name" value="H71293"/>
</dbReference>
<dbReference type="SMR" id="O83697"/>
<dbReference type="IntAct" id="O83697">
    <property type="interactions" value="5"/>
</dbReference>
<dbReference type="EnsemblBacteria" id="AAC65668">
    <property type="protein sequence ID" value="AAC65668"/>
    <property type="gene ID" value="TP_0699"/>
</dbReference>
<dbReference type="KEGG" id="tpa:TP_0699"/>
<dbReference type="HOGENOM" id="CLU_3359083_0_0_12"/>
<dbReference type="Proteomes" id="UP000000811">
    <property type="component" value="Chromosome"/>
</dbReference>
<name>Y699_TREPA</name>
<protein>
    <recommendedName>
        <fullName>Uncharacterized protein TP_0699</fullName>
    </recommendedName>
</protein>
<organism>
    <name type="scientific">Treponema pallidum (strain Nichols)</name>
    <dbReference type="NCBI Taxonomy" id="243276"/>
    <lineage>
        <taxon>Bacteria</taxon>
        <taxon>Pseudomonadati</taxon>
        <taxon>Spirochaetota</taxon>
        <taxon>Spirochaetia</taxon>
        <taxon>Spirochaetales</taxon>
        <taxon>Treponemataceae</taxon>
        <taxon>Treponema</taxon>
    </lineage>
</organism>
<feature type="chain" id="PRO_0000202305" description="Uncharacterized protein TP_0699">
    <location>
        <begin position="1"/>
        <end position="36"/>
    </location>
</feature>